<comment type="function">
    <text evidence="2">During stationary phase, prevents 70S dimer formation, probably in order to regulate translation efficiency during transition between the exponential and the stationary phases. In addition, during environmental stress such as cold shock or excessive cell density at stationary phase, stabilizes the 70S ribosome against dissociation, inhibits translation initiation and increase translation accuracy. When normal growth conditions are restored, is quickly released from the ribosome (By similarity).</text>
</comment>
<comment type="subunit">
    <text evidence="2">Associates mainly with 70S ribosomes.</text>
</comment>
<comment type="induction">
    <text evidence="2">By environmental stress and during stationary phase.</text>
</comment>
<comment type="similarity">
    <text evidence="4">Belongs to the HPF/YfiA ribosome-associated protein family. YfiA subfamily.</text>
</comment>
<feature type="initiator methionine" description="Removed" evidence="1">
    <location>
        <position position="1"/>
    </location>
</feature>
<feature type="chain" id="PRO_0000169263" description="Ribosome-associated factor Y">
    <location>
        <begin position="2"/>
        <end position="113"/>
    </location>
</feature>
<feature type="region of interest" description="Disordered" evidence="3">
    <location>
        <begin position="91"/>
        <end position="113"/>
    </location>
</feature>
<feature type="modified residue" description="N6-acetyllysine" evidence="1">
    <location>
        <position position="66"/>
    </location>
</feature>
<reference key="1">
    <citation type="journal article" date="2002" name="Proc. Natl. Acad. Sci. U.S.A.">
        <title>Extensive mosaic structure revealed by the complete genome sequence of uropathogenic Escherichia coli.</title>
        <authorList>
            <person name="Welch R.A."/>
            <person name="Burland V."/>
            <person name="Plunkett G. III"/>
            <person name="Redford P."/>
            <person name="Roesch P."/>
            <person name="Rasko D."/>
            <person name="Buckles E.L."/>
            <person name="Liou S.-R."/>
            <person name="Boutin A."/>
            <person name="Hackett J."/>
            <person name="Stroud D."/>
            <person name="Mayhew G.F."/>
            <person name="Rose D.J."/>
            <person name="Zhou S."/>
            <person name="Schwartz D.C."/>
            <person name="Perna N.T."/>
            <person name="Mobley H.L.T."/>
            <person name="Donnenberg M.S."/>
            <person name="Blattner F.R."/>
        </authorList>
    </citation>
    <scope>NUCLEOTIDE SEQUENCE [LARGE SCALE GENOMIC DNA]</scope>
    <source>
        <strain>CFT073 / ATCC 700928 / UPEC</strain>
    </source>
</reference>
<evidence type="ECO:0000250" key="1"/>
<evidence type="ECO:0000250" key="2">
    <source>
        <dbReference type="UniProtKB" id="P0AD49"/>
    </source>
</evidence>
<evidence type="ECO:0000256" key="3">
    <source>
        <dbReference type="SAM" id="MobiDB-lite"/>
    </source>
</evidence>
<evidence type="ECO:0000305" key="4"/>
<accession>P0AD50</accession>
<accession>P11285</accession>
<organism>
    <name type="scientific">Escherichia coli O6:H1 (strain CFT073 / ATCC 700928 / UPEC)</name>
    <dbReference type="NCBI Taxonomy" id="199310"/>
    <lineage>
        <taxon>Bacteria</taxon>
        <taxon>Pseudomonadati</taxon>
        <taxon>Pseudomonadota</taxon>
        <taxon>Gammaproteobacteria</taxon>
        <taxon>Enterobacterales</taxon>
        <taxon>Enterobacteriaceae</taxon>
        <taxon>Escherichia</taxon>
    </lineage>
</organism>
<sequence>MTMNITSKQMEITPAIRQHVADRLAKLEKWQTHLINPHIILSKEPQGFVADATINTPNGVLVASGKHEDMYTAINELINKLERQLNKLQHKGEARRAATSVKDANFVEEVEEE</sequence>
<proteinExistence type="inferred from homology"/>
<keyword id="KW-0007">Acetylation</keyword>
<keyword id="KW-1185">Reference proteome</keyword>
<keyword id="KW-0346">Stress response</keyword>
<keyword id="KW-0810">Translation regulation</keyword>
<name>YFIA_ECOL6</name>
<dbReference type="EMBL" id="AE014075">
    <property type="protein sequence ID" value="AAN81568.1"/>
    <property type="molecule type" value="Genomic_DNA"/>
</dbReference>
<dbReference type="RefSeq" id="WP_000178456.1">
    <property type="nucleotide sequence ID" value="NZ_CP051263.1"/>
</dbReference>
<dbReference type="BMRB" id="P0AD50"/>
<dbReference type="SMR" id="P0AD50"/>
<dbReference type="STRING" id="199310.c3119"/>
<dbReference type="GeneID" id="93774443"/>
<dbReference type="KEGG" id="ecc:c3119"/>
<dbReference type="eggNOG" id="COG1544">
    <property type="taxonomic scope" value="Bacteria"/>
</dbReference>
<dbReference type="HOGENOM" id="CLU_071472_3_0_6"/>
<dbReference type="BioCyc" id="ECOL199310:C3119-MONOMER"/>
<dbReference type="Proteomes" id="UP000001410">
    <property type="component" value="Chromosome"/>
</dbReference>
<dbReference type="GO" id="GO:0022627">
    <property type="term" value="C:cytosolic small ribosomal subunit"/>
    <property type="evidence" value="ECO:0007669"/>
    <property type="project" value="TreeGrafter"/>
</dbReference>
<dbReference type="GO" id="GO:0043024">
    <property type="term" value="F:ribosomal small subunit binding"/>
    <property type="evidence" value="ECO:0007669"/>
    <property type="project" value="TreeGrafter"/>
</dbReference>
<dbReference type="GO" id="GO:0045900">
    <property type="term" value="P:negative regulation of translational elongation"/>
    <property type="evidence" value="ECO:0007669"/>
    <property type="project" value="TreeGrafter"/>
</dbReference>
<dbReference type="CDD" id="cd00552">
    <property type="entry name" value="RaiA"/>
    <property type="match status" value="1"/>
</dbReference>
<dbReference type="FunFam" id="3.30.160.100:FF:000002">
    <property type="entry name" value="Ribosome-associated translation inhibitor RaiA"/>
    <property type="match status" value="1"/>
</dbReference>
<dbReference type="Gene3D" id="3.30.160.100">
    <property type="entry name" value="Ribosome hibernation promotion factor-like"/>
    <property type="match status" value="1"/>
</dbReference>
<dbReference type="InterPro" id="IPR050574">
    <property type="entry name" value="HPF/YfiA_ribosome-assoc"/>
</dbReference>
<dbReference type="InterPro" id="IPR036567">
    <property type="entry name" value="RHF-like"/>
</dbReference>
<dbReference type="InterPro" id="IPR003489">
    <property type="entry name" value="RHF/RaiA"/>
</dbReference>
<dbReference type="NCBIfam" id="NF007654">
    <property type="entry name" value="PRK10324.1"/>
    <property type="match status" value="1"/>
</dbReference>
<dbReference type="NCBIfam" id="TIGR00741">
    <property type="entry name" value="yfiA"/>
    <property type="match status" value="1"/>
</dbReference>
<dbReference type="PANTHER" id="PTHR33231">
    <property type="entry name" value="30S RIBOSOMAL PROTEIN"/>
    <property type="match status" value="1"/>
</dbReference>
<dbReference type="PANTHER" id="PTHR33231:SF3">
    <property type="entry name" value="RIBOSOME-ASSOCIATED INHIBITOR A"/>
    <property type="match status" value="1"/>
</dbReference>
<dbReference type="Pfam" id="PF02482">
    <property type="entry name" value="Ribosomal_S30AE"/>
    <property type="match status" value="1"/>
</dbReference>
<dbReference type="SUPFAM" id="SSF69754">
    <property type="entry name" value="Ribosome binding protein Y (YfiA homologue)"/>
    <property type="match status" value="1"/>
</dbReference>
<protein>
    <recommendedName>
        <fullName evidence="4">Ribosome-associated factor Y</fullName>
        <shortName>pY</shortName>
    </recommendedName>
    <alternativeName>
        <fullName>Ribosome associated inhibitor A</fullName>
    </alternativeName>
</protein>
<gene>
    <name evidence="4" type="primary">yfiA</name>
    <name type="synonym">raiA</name>
    <name type="ordered locus">c3119</name>
</gene>